<keyword id="KW-0050">Antiport</keyword>
<keyword id="KW-0997">Cell inner membrane</keyword>
<keyword id="KW-1003">Cell membrane</keyword>
<keyword id="KW-0472">Membrane</keyword>
<keyword id="KW-1185">Reference proteome</keyword>
<keyword id="KW-0812">Transmembrane</keyword>
<keyword id="KW-1133">Transmembrane helix</keyword>
<keyword id="KW-0813">Transport</keyword>
<accession>P0ABN8</accession>
<accession>P04539</accession>
<gene>
    <name type="primary">dcuA</name>
    <name type="ordered locus">SF4292</name>
    <name type="ordered locus">S4559</name>
</gene>
<protein>
    <recommendedName>
        <fullName evidence="1">C4-dicarboxylate transporter DcuA</fullName>
    </recommendedName>
</protein>
<name>DCUA_SHIFL</name>
<feature type="chain" id="PRO_0000170353" description="C4-dicarboxylate transporter DcuA">
    <location>
        <begin position="1"/>
        <end position="433"/>
    </location>
</feature>
<feature type="transmembrane region" description="Helical" evidence="1">
    <location>
        <begin position="1"/>
        <end position="18"/>
    </location>
</feature>
<feature type="topological domain" description="Cytoplasmic" evidence="1">
    <location>
        <position position="19"/>
    </location>
</feature>
<feature type="transmembrane region" description="Helical" evidence="1">
    <location>
        <begin position="20"/>
        <end position="37"/>
    </location>
</feature>
<feature type="topological domain" description="Periplasmic" evidence="1">
    <location>
        <begin position="38"/>
        <end position="53"/>
    </location>
</feature>
<feature type="transmembrane region" description="Helical" evidence="1">
    <location>
        <begin position="54"/>
        <end position="71"/>
    </location>
</feature>
<feature type="topological domain" description="Cytoplasmic" evidence="1">
    <location>
        <begin position="72"/>
        <end position="85"/>
    </location>
</feature>
<feature type="transmembrane region" description="Helical" evidence="1">
    <location>
        <begin position="86"/>
        <end position="103"/>
    </location>
</feature>
<feature type="topological domain" description="Periplasmic" evidence="1">
    <location>
        <begin position="104"/>
        <end position="132"/>
    </location>
</feature>
<feature type="transmembrane region" description="Helical" evidence="1">
    <location>
        <begin position="133"/>
        <end position="147"/>
    </location>
</feature>
<feature type="topological domain" description="Cytoplasmic" evidence="1">
    <location>
        <begin position="148"/>
        <end position="228"/>
    </location>
</feature>
<feature type="transmembrane region" description="Helical" evidence="1">
    <location>
        <begin position="229"/>
        <end position="246"/>
    </location>
</feature>
<feature type="topological domain" description="Periplasmic" evidence="1">
    <location>
        <begin position="247"/>
        <end position="264"/>
    </location>
</feature>
<feature type="transmembrane region" description="Helical" evidence="1">
    <location>
        <begin position="265"/>
        <end position="282"/>
    </location>
</feature>
<feature type="topological domain" description="Cytoplasmic" evidence="1">
    <location>
        <begin position="283"/>
        <end position="292"/>
    </location>
</feature>
<feature type="transmembrane region" description="Helical" evidence="1">
    <location>
        <begin position="293"/>
        <end position="310"/>
    </location>
</feature>
<feature type="topological domain" description="Periplasmic" evidence="1">
    <location>
        <begin position="311"/>
        <end position="332"/>
    </location>
</feature>
<feature type="transmembrane region" description="Helical" evidence="1">
    <location>
        <begin position="333"/>
        <end position="350"/>
    </location>
</feature>
<feature type="topological domain" description="Cytoplasmic" evidence="1">
    <location>
        <begin position="351"/>
        <end position="355"/>
    </location>
</feature>
<feature type="transmembrane region" description="Helical" evidence="1">
    <location>
        <begin position="356"/>
        <end position="373"/>
    </location>
</feature>
<feature type="topological domain" description="Periplasmic" evidence="1">
    <location>
        <begin position="374"/>
        <end position="433"/>
    </location>
</feature>
<evidence type="ECO:0000250" key="1">
    <source>
        <dbReference type="UniProtKB" id="P0ABN5"/>
    </source>
</evidence>
<evidence type="ECO:0000305" key="2"/>
<comment type="function">
    <text evidence="1">Responsible for the transport of C4-dicarboxylates during aerobic and anaerobic growth. Required for the uptake of L-aspartate as a nitrogen source during aerobic growth. The uptake of L-aspartate in aerobic conditions is coupled to the excretion of fumarate, resulting in the net uptake of nitrogen without carbon uptake. In addition, during anaerobic growth, catalyzes the uptake of fumarate, malate or aspartate coupled to the export of succinate. May play a a general role in anaerobic C4-dicarboxylate transport.</text>
</comment>
<comment type="catalytic activity">
    <reaction evidence="1">
        <text>fumarate(in) + L-aspartate(out) = fumarate(out) + L-aspartate(in)</text>
        <dbReference type="Rhea" id="RHEA:72459"/>
        <dbReference type="ChEBI" id="CHEBI:29806"/>
        <dbReference type="ChEBI" id="CHEBI:29991"/>
    </reaction>
    <physiologicalReaction direction="left-to-right" evidence="1">
        <dbReference type="Rhea" id="RHEA:72460"/>
    </physiologicalReaction>
</comment>
<comment type="catalytic activity">
    <reaction evidence="1">
        <text>fumarate(in) + succinate(out) = fumarate(out) + succinate(in)</text>
        <dbReference type="Rhea" id="RHEA:29323"/>
        <dbReference type="ChEBI" id="CHEBI:29806"/>
        <dbReference type="ChEBI" id="CHEBI:30031"/>
    </reaction>
    <physiologicalReaction direction="right-to-left" evidence="1">
        <dbReference type="Rhea" id="RHEA:29325"/>
    </physiologicalReaction>
</comment>
<comment type="catalytic activity">
    <reaction evidence="1">
        <text>(S)-malate(in) + succinate(out) = (S)-malate(out) + succinate(in)</text>
        <dbReference type="Rhea" id="RHEA:29327"/>
        <dbReference type="ChEBI" id="CHEBI:15589"/>
        <dbReference type="ChEBI" id="CHEBI:30031"/>
    </reaction>
    <physiologicalReaction direction="right-to-left" evidence="1">
        <dbReference type="Rhea" id="RHEA:29329"/>
    </physiologicalReaction>
</comment>
<comment type="catalytic activity">
    <reaction evidence="1">
        <text>L-aspartate(in) + succinate(out) = L-aspartate(out) + succinate(in)</text>
        <dbReference type="Rhea" id="RHEA:29343"/>
        <dbReference type="ChEBI" id="CHEBI:29991"/>
        <dbReference type="ChEBI" id="CHEBI:30031"/>
    </reaction>
    <physiologicalReaction direction="right-to-left" evidence="1">
        <dbReference type="Rhea" id="RHEA:29345"/>
    </physiologicalReaction>
</comment>
<comment type="subcellular location">
    <subcellularLocation>
        <location evidence="1">Cell inner membrane</location>
        <topology evidence="1">Multi-pass membrane protein</topology>
    </subcellularLocation>
</comment>
<comment type="similarity">
    <text evidence="2">Belongs to the DcuA/DcuB transporter (TC 2.A.13.1) family.</text>
</comment>
<organism>
    <name type="scientific">Shigella flexneri</name>
    <dbReference type="NCBI Taxonomy" id="623"/>
    <lineage>
        <taxon>Bacteria</taxon>
        <taxon>Pseudomonadati</taxon>
        <taxon>Pseudomonadota</taxon>
        <taxon>Gammaproteobacteria</taxon>
        <taxon>Enterobacterales</taxon>
        <taxon>Enterobacteriaceae</taxon>
        <taxon>Shigella</taxon>
    </lineage>
</organism>
<reference key="1">
    <citation type="journal article" date="2002" name="Nucleic Acids Res.">
        <title>Genome sequence of Shigella flexneri 2a: insights into pathogenicity through comparison with genomes of Escherichia coli K12 and O157.</title>
        <authorList>
            <person name="Jin Q."/>
            <person name="Yuan Z."/>
            <person name="Xu J."/>
            <person name="Wang Y."/>
            <person name="Shen Y."/>
            <person name="Lu W."/>
            <person name="Wang J."/>
            <person name="Liu H."/>
            <person name="Yang J."/>
            <person name="Yang F."/>
            <person name="Zhang X."/>
            <person name="Zhang J."/>
            <person name="Yang G."/>
            <person name="Wu H."/>
            <person name="Qu D."/>
            <person name="Dong J."/>
            <person name="Sun L."/>
            <person name="Xue Y."/>
            <person name="Zhao A."/>
            <person name="Gao Y."/>
            <person name="Zhu J."/>
            <person name="Kan B."/>
            <person name="Ding K."/>
            <person name="Chen S."/>
            <person name="Cheng H."/>
            <person name="Yao Z."/>
            <person name="He B."/>
            <person name="Chen R."/>
            <person name="Ma D."/>
            <person name="Qiang B."/>
            <person name="Wen Y."/>
            <person name="Hou Y."/>
            <person name="Yu J."/>
        </authorList>
    </citation>
    <scope>NUCLEOTIDE SEQUENCE [LARGE SCALE GENOMIC DNA]</scope>
    <source>
        <strain>301 / Serotype 2a</strain>
    </source>
</reference>
<reference key="2">
    <citation type="journal article" date="2003" name="Infect. Immun.">
        <title>Complete genome sequence and comparative genomics of Shigella flexneri serotype 2a strain 2457T.</title>
        <authorList>
            <person name="Wei J."/>
            <person name="Goldberg M.B."/>
            <person name="Burland V."/>
            <person name="Venkatesan M.M."/>
            <person name="Deng W."/>
            <person name="Fournier G."/>
            <person name="Mayhew G.F."/>
            <person name="Plunkett G. III"/>
            <person name="Rose D.J."/>
            <person name="Darling A."/>
            <person name="Mau B."/>
            <person name="Perna N.T."/>
            <person name="Payne S.M."/>
            <person name="Runyen-Janecky L.J."/>
            <person name="Zhou S."/>
            <person name="Schwartz D.C."/>
            <person name="Blattner F.R."/>
        </authorList>
    </citation>
    <scope>NUCLEOTIDE SEQUENCE [LARGE SCALE GENOMIC DNA]</scope>
    <source>
        <strain>ATCC 700930 / 2457T / Serotype 2a</strain>
    </source>
</reference>
<dbReference type="EMBL" id="AE005674">
    <property type="protein sequence ID" value="AAN45710.1"/>
    <property type="molecule type" value="Genomic_DNA"/>
</dbReference>
<dbReference type="EMBL" id="AE014073">
    <property type="protein sequence ID" value="AAP19496.1"/>
    <property type="molecule type" value="Genomic_DNA"/>
</dbReference>
<dbReference type="RefSeq" id="NP_710003.1">
    <property type="nucleotide sequence ID" value="NC_004337.2"/>
</dbReference>
<dbReference type="RefSeq" id="WP_000961959.1">
    <property type="nucleotide sequence ID" value="NZ_WPGW01000108.1"/>
</dbReference>
<dbReference type="SMR" id="P0ABN8"/>
<dbReference type="STRING" id="198214.SF4292"/>
<dbReference type="PaxDb" id="198214-SF4292"/>
<dbReference type="GeneID" id="1027378"/>
<dbReference type="GeneID" id="93777686"/>
<dbReference type="KEGG" id="sfl:SF4292"/>
<dbReference type="KEGG" id="sfx:S4559"/>
<dbReference type="PATRIC" id="fig|198214.7.peg.5062"/>
<dbReference type="HOGENOM" id="CLU_036056_1_1_6"/>
<dbReference type="Proteomes" id="UP000001006">
    <property type="component" value="Chromosome"/>
</dbReference>
<dbReference type="Proteomes" id="UP000002673">
    <property type="component" value="Chromosome"/>
</dbReference>
<dbReference type="GO" id="GO:0005886">
    <property type="term" value="C:plasma membrane"/>
    <property type="evidence" value="ECO:0007669"/>
    <property type="project" value="UniProtKB-SubCell"/>
</dbReference>
<dbReference type="GO" id="GO:0015297">
    <property type="term" value="F:antiporter activity"/>
    <property type="evidence" value="ECO:0007669"/>
    <property type="project" value="UniProtKB-KW"/>
</dbReference>
<dbReference type="GO" id="GO:0015556">
    <property type="term" value="F:C4-dicarboxylate transmembrane transporter activity"/>
    <property type="evidence" value="ECO:0007669"/>
    <property type="project" value="InterPro"/>
</dbReference>
<dbReference type="InterPro" id="IPR004668">
    <property type="entry name" value="Anaer_Dcu_memb_transpt"/>
</dbReference>
<dbReference type="NCBIfam" id="TIGR00770">
    <property type="entry name" value="Dcu"/>
    <property type="match status" value="1"/>
</dbReference>
<dbReference type="NCBIfam" id="NF006927">
    <property type="entry name" value="PRK09412.1"/>
    <property type="match status" value="1"/>
</dbReference>
<dbReference type="NCBIfam" id="NF009136">
    <property type="entry name" value="PRK12489.1"/>
    <property type="match status" value="1"/>
</dbReference>
<dbReference type="PANTHER" id="PTHR36106">
    <property type="entry name" value="ANAEROBIC C4-DICARBOXYLATE TRANSPORTER DCUB"/>
    <property type="match status" value="1"/>
</dbReference>
<dbReference type="PANTHER" id="PTHR36106:SF2">
    <property type="entry name" value="C4-DICARBOXYLATE TRANSPORTER DCUA"/>
    <property type="match status" value="1"/>
</dbReference>
<dbReference type="Pfam" id="PF03605">
    <property type="entry name" value="DcuA_DcuB"/>
    <property type="match status" value="1"/>
</dbReference>
<dbReference type="PIRSF" id="PIRSF004539">
    <property type="entry name" value="C4-dicrbxl_trns"/>
    <property type="match status" value="1"/>
</dbReference>
<sequence length="433" mass="45751">MLVVELIIVLLAIFLGARLGGIGIGFAGGLGVLVLAAIGVKPGNIPFDVISIIMAVIAAISAMQVAGGLDYLVHQTEKLLRRNPKYITILAPIVTYFLTIFAGTGNISLATLPVIAEVAKEQGVKPCRPLSTAVVSAQIAITASPISAAVVYMSSVMEGHGISYLHLLSVVIPSTLLAVLVMSFLVTMLFNSKLSDDPIYRKRLEEGLVELRGEKQIEIKSGAKTSVWLFLLGVVGVVIYAIINSPSMGLVEKPLMNTTNAILIIMLSVATLTTVICKVDTDNILNSSTFKAGMSACICILGVAWLGDTFVSNNIDWIKDTAGEVIQGHPWLLAVIFFFASALLYSQAATAKALMPMALALNVSPLTAVASFAAVSGLFILPTYPTLVAAVQMDDTGTTRIGKFVFNHPFFIPGTLGVALAVCFGFVLGSFML</sequence>
<proteinExistence type="inferred from homology"/>